<feature type="chain" id="PRO_1000084952" description="DNA polymerase IV">
    <location>
        <begin position="1"/>
        <end position="370"/>
    </location>
</feature>
<feature type="domain" description="UmuC" evidence="1">
    <location>
        <begin position="14"/>
        <end position="198"/>
    </location>
</feature>
<feature type="active site" evidence="1">
    <location>
        <position position="117"/>
    </location>
</feature>
<feature type="binding site" evidence="1">
    <location>
        <position position="18"/>
    </location>
    <ligand>
        <name>Mg(2+)</name>
        <dbReference type="ChEBI" id="CHEBI:18420"/>
    </ligand>
</feature>
<feature type="binding site" evidence="1">
    <location>
        <position position="116"/>
    </location>
    <ligand>
        <name>Mg(2+)</name>
        <dbReference type="ChEBI" id="CHEBI:18420"/>
    </ligand>
</feature>
<feature type="site" description="Substrate discrimination" evidence="1">
    <location>
        <position position="23"/>
    </location>
</feature>
<comment type="function">
    <text evidence="1">Poorly processive, error-prone DNA polymerase involved in untargeted mutagenesis. Copies undamaged DNA at stalled replication forks, which arise in vivo from mismatched or misaligned primer ends. These misaligned primers can be extended by PolIV. Exhibits no 3'-5' exonuclease (proofreading) activity. May be involved in translesional synthesis, in conjunction with the beta clamp from PolIII.</text>
</comment>
<comment type="catalytic activity">
    <reaction evidence="1">
        <text>DNA(n) + a 2'-deoxyribonucleoside 5'-triphosphate = DNA(n+1) + diphosphate</text>
        <dbReference type="Rhea" id="RHEA:22508"/>
        <dbReference type="Rhea" id="RHEA-COMP:17339"/>
        <dbReference type="Rhea" id="RHEA-COMP:17340"/>
        <dbReference type="ChEBI" id="CHEBI:33019"/>
        <dbReference type="ChEBI" id="CHEBI:61560"/>
        <dbReference type="ChEBI" id="CHEBI:173112"/>
        <dbReference type="EC" id="2.7.7.7"/>
    </reaction>
</comment>
<comment type="cofactor">
    <cofactor evidence="1">
        <name>Mg(2+)</name>
        <dbReference type="ChEBI" id="CHEBI:18420"/>
    </cofactor>
    <text evidence="1">Binds 2 magnesium ions per subunit.</text>
</comment>
<comment type="subunit">
    <text evidence="1">Monomer.</text>
</comment>
<comment type="subcellular location">
    <subcellularLocation>
        <location evidence="1">Cytoplasm</location>
    </subcellularLocation>
</comment>
<comment type="similarity">
    <text evidence="1">Belongs to the DNA polymerase type-Y family.</text>
</comment>
<protein>
    <recommendedName>
        <fullName evidence="1">DNA polymerase IV</fullName>
        <shortName evidence="1">Pol IV</shortName>
        <ecNumber evidence="1">2.7.7.7</ecNumber>
    </recommendedName>
</protein>
<organism>
    <name type="scientific">Streptococcus mutans serotype c (strain ATCC 700610 / UA159)</name>
    <dbReference type="NCBI Taxonomy" id="210007"/>
    <lineage>
        <taxon>Bacteria</taxon>
        <taxon>Bacillati</taxon>
        <taxon>Bacillota</taxon>
        <taxon>Bacilli</taxon>
        <taxon>Lactobacillales</taxon>
        <taxon>Streptococcaceae</taxon>
        <taxon>Streptococcus</taxon>
    </lineage>
</organism>
<reference key="1">
    <citation type="journal article" date="2002" name="Proc. Natl. Acad. Sci. U.S.A.">
        <title>Genome sequence of Streptococcus mutans UA159, a cariogenic dental pathogen.</title>
        <authorList>
            <person name="Ajdic D.J."/>
            <person name="McShan W.M."/>
            <person name="McLaughlin R.E."/>
            <person name="Savic G."/>
            <person name="Chang J."/>
            <person name="Carson M.B."/>
            <person name="Primeaux C."/>
            <person name="Tian R."/>
            <person name="Kenton S."/>
            <person name="Jia H.G."/>
            <person name="Lin S.P."/>
            <person name="Qian Y."/>
            <person name="Li S."/>
            <person name="Zhu H."/>
            <person name="Najar F.Z."/>
            <person name="Lai H."/>
            <person name="White J."/>
            <person name="Roe B.A."/>
            <person name="Ferretti J.J."/>
        </authorList>
    </citation>
    <scope>NUCLEOTIDE SEQUENCE [LARGE SCALE GENOMIC DNA]</scope>
    <source>
        <strain>ATCC 700610 / UA159</strain>
    </source>
</reference>
<sequence>MLIFPLINDTSRKIIHIDMDAFFAAVEERDNPKLKGKPLVIGADPRQTGGRGVVSTANYLAREFGIHSAMSSKEAYERCPQAIFIRGNHTKYRQIGLQVREIFRRYTDLVEPMSIDEAYLDVTENKLNIKSAVKIAKLIQRDIWEEFHLTCSAGVSYNKFLAKLASDYDKPHGLTVILPQDAEGFLATLPIEKFYGVGKKSVEKLHALHIFTGKDVQQVPEMTLIDLFGRFGFDLYRKARGISNSPVKNDRIRKSIGSERTYGKLLYNDEDIKLELSKTARRVADSLKKHGRKGKIVVIKVRYSDFSTLTKRKTLDVPTQDFEVIERSAHRIFDHLTENNSGVRLLGVTVTALEDSTREELSLTADDFKT</sequence>
<accession>Q8DVR7</accession>
<keyword id="KW-0963">Cytoplasm</keyword>
<keyword id="KW-0227">DNA damage</keyword>
<keyword id="KW-0234">DNA repair</keyword>
<keyword id="KW-0235">DNA replication</keyword>
<keyword id="KW-0238">DNA-binding</keyword>
<keyword id="KW-0239">DNA-directed DNA polymerase</keyword>
<keyword id="KW-0460">Magnesium</keyword>
<keyword id="KW-0479">Metal-binding</keyword>
<keyword id="KW-0515">Mutator protein</keyword>
<keyword id="KW-0548">Nucleotidyltransferase</keyword>
<keyword id="KW-1185">Reference proteome</keyword>
<keyword id="KW-0808">Transferase</keyword>
<name>DPO4_STRMU</name>
<gene>
    <name evidence="1" type="primary">dinB</name>
    <name type="ordered locus">SMU_403</name>
</gene>
<evidence type="ECO:0000255" key="1">
    <source>
        <dbReference type="HAMAP-Rule" id="MF_01113"/>
    </source>
</evidence>
<proteinExistence type="inferred from homology"/>
<dbReference type="EC" id="2.7.7.7" evidence="1"/>
<dbReference type="EMBL" id="AE014133">
    <property type="protein sequence ID" value="AAN58157.1"/>
    <property type="molecule type" value="Genomic_DNA"/>
</dbReference>
<dbReference type="RefSeq" id="NP_720851.1">
    <property type="nucleotide sequence ID" value="NC_004350.2"/>
</dbReference>
<dbReference type="RefSeq" id="WP_002262618.1">
    <property type="nucleotide sequence ID" value="NC_004350.2"/>
</dbReference>
<dbReference type="SMR" id="Q8DVR7"/>
<dbReference type="STRING" id="210007.SMU_403"/>
<dbReference type="KEGG" id="smu:SMU_403"/>
<dbReference type="PATRIC" id="fig|210007.7.peg.353"/>
<dbReference type="eggNOG" id="COG0389">
    <property type="taxonomic scope" value="Bacteria"/>
</dbReference>
<dbReference type="HOGENOM" id="CLU_012348_1_2_9"/>
<dbReference type="OrthoDB" id="9808813at2"/>
<dbReference type="PhylomeDB" id="Q8DVR7"/>
<dbReference type="Proteomes" id="UP000002512">
    <property type="component" value="Chromosome"/>
</dbReference>
<dbReference type="GO" id="GO:0005829">
    <property type="term" value="C:cytosol"/>
    <property type="evidence" value="ECO:0007669"/>
    <property type="project" value="TreeGrafter"/>
</dbReference>
<dbReference type="GO" id="GO:0003684">
    <property type="term" value="F:damaged DNA binding"/>
    <property type="evidence" value="ECO:0007669"/>
    <property type="project" value="InterPro"/>
</dbReference>
<dbReference type="GO" id="GO:0003887">
    <property type="term" value="F:DNA-directed DNA polymerase activity"/>
    <property type="evidence" value="ECO:0007669"/>
    <property type="project" value="UniProtKB-UniRule"/>
</dbReference>
<dbReference type="GO" id="GO:0000287">
    <property type="term" value="F:magnesium ion binding"/>
    <property type="evidence" value="ECO:0007669"/>
    <property type="project" value="UniProtKB-UniRule"/>
</dbReference>
<dbReference type="GO" id="GO:0006261">
    <property type="term" value="P:DNA-templated DNA replication"/>
    <property type="evidence" value="ECO:0007669"/>
    <property type="project" value="UniProtKB-UniRule"/>
</dbReference>
<dbReference type="GO" id="GO:0042276">
    <property type="term" value="P:error-prone translesion synthesis"/>
    <property type="evidence" value="ECO:0007669"/>
    <property type="project" value="TreeGrafter"/>
</dbReference>
<dbReference type="GO" id="GO:0009432">
    <property type="term" value="P:SOS response"/>
    <property type="evidence" value="ECO:0007669"/>
    <property type="project" value="TreeGrafter"/>
</dbReference>
<dbReference type="CDD" id="cd03586">
    <property type="entry name" value="PolY_Pol_IV_kappa"/>
    <property type="match status" value="1"/>
</dbReference>
<dbReference type="FunFam" id="3.30.1490.100:FF:000004">
    <property type="entry name" value="DNA polymerase IV"/>
    <property type="match status" value="1"/>
</dbReference>
<dbReference type="FunFam" id="3.40.1170.60:FF:000001">
    <property type="entry name" value="DNA polymerase IV"/>
    <property type="match status" value="1"/>
</dbReference>
<dbReference type="Gene3D" id="3.30.70.270">
    <property type="match status" value="1"/>
</dbReference>
<dbReference type="Gene3D" id="3.40.1170.60">
    <property type="match status" value="1"/>
</dbReference>
<dbReference type="Gene3D" id="1.10.150.20">
    <property type="entry name" value="5' to 3' exonuclease, C-terminal subdomain"/>
    <property type="match status" value="1"/>
</dbReference>
<dbReference type="Gene3D" id="3.30.1490.100">
    <property type="entry name" value="DNA polymerase, Y-family, little finger domain"/>
    <property type="match status" value="1"/>
</dbReference>
<dbReference type="HAMAP" id="MF_01113">
    <property type="entry name" value="DNApol_IV"/>
    <property type="match status" value="1"/>
</dbReference>
<dbReference type="InterPro" id="IPR043502">
    <property type="entry name" value="DNA/RNA_pol_sf"/>
</dbReference>
<dbReference type="InterPro" id="IPR036775">
    <property type="entry name" value="DNA_pol_Y-fam_lit_finger_sf"/>
</dbReference>
<dbReference type="InterPro" id="IPR017961">
    <property type="entry name" value="DNA_pol_Y-fam_little_finger"/>
</dbReference>
<dbReference type="InterPro" id="IPR050116">
    <property type="entry name" value="DNA_polymerase-Y"/>
</dbReference>
<dbReference type="InterPro" id="IPR022880">
    <property type="entry name" value="DNApol_IV"/>
</dbReference>
<dbReference type="InterPro" id="IPR024728">
    <property type="entry name" value="PolY_HhH_motif"/>
</dbReference>
<dbReference type="InterPro" id="IPR043128">
    <property type="entry name" value="Rev_trsase/Diguanyl_cyclase"/>
</dbReference>
<dbReference type="InterPro" id="IPR001126">
    <property type="entry name" value="UmuC"/>
</dbReference>
<dbReference type="NCBIfam" id="NF002677">
    <property type="entry name" value="PRK02406.1"/>
    <property type="match status" value="1"/>
</dbReference>
<dbReference type="PANTHER" id="PTHR11076:SF33">
    <property type="entry name" value="DNA POLYMERASE KAPPA"/>
    <property type="match status" value="1"/>
</dbReference>
<dbReference type="PANTHER" id="PTHR11076">
    <property type="entry name" value="DNA REPAIR POLYMERASE UMUC / TRANSFERASE FAMILY MEMBER"/>
    <property type="match status" value="1"/>
</dbReference>
<dbReference type="Pfam" id="PF00817">
    <property type="entry name" value="IMS"/>
    <property type="match status" value="1"/>
</dbReference>
<dbReference type="Pfam" id="PF11799">
    <property type="entry name" value="IMS_C"/>
    <property type="match status" value="1"/>
</dbReference>
<dbReference type="Pfam" id="PF11798">
    <property type="entry name" value="IMS_HHH"/>
    <property type="match status" value="1"/>
</dbReference>
<dbReference type="SUPFAM" id="SSF56672">
    <property type="entry name" value="DNA/RNA polymerases"/>
    <property type="match status" value="1"/>
</dbReference>
<dbReference type="SUPFAM" id="SSF100879">
    <property type="entry name" value="Lesion bypass DNA polymerase (Y-family), little finger domain"/>
    <property type="match status" value="1"/>
</dbReference>
<dbReference type="PROSITE" id="PS50173">
    <property type="entry name" value="UMUC"/>
    <property type="match status" value="1"/>
</dbReference>